<gene>
    <name evidence="1" type="primary">efp</name>
    <name type="ordered locus">RALTA_A2050</name>
</gene>
<comment type="function">
    <text evidence="1">Involved in peptide bond synthesis. Stimulates efficient translation and peptide-bond synthesis on native or reconstituted 70S ribosomes in vitro. Probably functions indirectly by altering the affinity of the ribosome for aminoacyl-tRNA, thus increasing their reactivity as acceptors for peptidyl transferase.</text>
</comment>
<comment type="pathway">
    <text evidence="1">Protein biosynthesis; polypeptide chain elongation.</text>
</comment>
<comment type="subcellular location">
    <subcellularLocation>
        <location evidence="1">Cytoplasm</location>
    </subcellularLocation>
</comment>
<comment type="similarity">
    <text evidence="1">Belongs to the elongation factor P family.</text>
</comment>
<sequence length="186" mass="20984">MKIAQELRVGNVFMIGGDPMVVQKAEYNKSGRNAAVVKMKYKNLLTDAPGESVFKADDKFEVVVLERRECTYSYFADPMYVFMDADYNQYEVEKDSMGDSLNYLEDGMNVEVVFYNDKAISVEMPTTLVREIVYTEPAVKGDTSSGKVLKGAKINTGFELQVPLFCNIGDKIEIDTRTGEYRSRAN</sequence>
<evidence type="ECO:0000255" key="1">
    <source>
        <dbReference type="HAMAP-Rule" id="MF_00141"/>
    </source>
</evidence>
<proteinExistence type="inferred from homology"/>
<name>EFP_CUPTR</name>
<keyword id="KW-0963">Cytoplasm</keyword>
<keyword id="KW-0251">Elongation factor</keyword>
<keyword id="KW-0648">Protein biosynthesis</keyword>
<protein>
    <recommendedName>
        <fullName evidence="1">Elongation factor P</fullName>
        <shortName evidence="1">EF-P</shortName>
    </recommendedName>
</protein>
<accession>B3R1Z3</accession>
<dbReference type="EMBL" id="CU633749">
    <property type="protein sequence ID" value="CAQ69990.1"/>
    <property type="molecule type" value="Genomic_DNA"/>
</dbReference>
<dbReference type="RefSeq" id="WP_010814696.1">
    <property type="nucleotide sequence ID" value="NC_010528.1"/>
</dbReference>
<dbReference type="SMR" id="B3R1Z3"/>
<dbReference type="GeneID" id="29762169"/>
<dbReference type="KEGG" id="cti:RALTA_A2050"/>
<dbReference type="eggNOG" id="COG0231">
    <property type="taxonomic scope" value="Bacteria"/>
</dbReference>
<dbReference type="HOGENOM" id="CLU_074944_2_1_4"/>
<dbReference type="BioCyc" id="CTAI977880:RALTA_RS09955-MONOMER"/>
<dbReference type="UniPathway" id="UPA00345"/>
<dbReference type="Proteomes" id="UP000001692">
    <property type="component" value="Chromosome 1"/>
</dbReference>
<dbReference type="GO" id="GO:0005737">
    <property type="term" value="C:cytoplasm"/>
    <property type="evidence" value="ECO:0007669"/>
    <property type="project" value="UniProtKB-SubCell"/>
</dbReference>
<dbReference type="GO" id="GO:0003746">
    <property type="term" value="F:translation elongation factor activity"/>
    <property type="evidence" value="ECO:0007669"/>
    <property type="project" value="UniProtKB-UniRule"/>
</dbReference>
<dbReference type="GO" id="GO:0043043">
    <property type="term" value="P:peptide biosynthetic process"/>
    <property type="evidence" value="ECO:0007669"/>
    <property type="project" value="InterPro"/>
</dbReference>
<dbReference type="CDD" id="cd04470">
    <property type="entry name" value="S1_EF-P_repeat_1"/>
    <property type="match status" value="1"/>
</dbReference>
<dbReference type="CDD" id="cd05794">
    <property type="entry name" value="S1_EF-P_repeat_2"/>
    <property type="match status" value="1"/>
</dbReference>
<dbReference type="FunFam" id="2.30.30.30:FF:000003">
    <property type="entry name" value="Elongation factor P"/>
    <property type="match status" value="1"/>
</dbReference>
<dbReference type="FunFam" id="2.40.50.140:FF:000004">
    <property type="entry name" value="Elongation factor P"/>
    <property type="match status" value="1"/>
</dbReference>
<dbReference type="FunFam" id="2.40.50.140:FF:000009">
    <property type="entry name" value="Elongation factor P"/>
    <property type="match status" value="1"/>
</dbReference>
<dbReference type="Gene3D" id="2.30.30.30">
    <property type="match status" value="1"/>
</dbReference>
<dbReference type="Gene3D" id="2.40.50.140">
    <property type="entry name" value="Nucleic acid-binding proteins"/>
    <property type="match status" value="2"/>
</dbReference>
<dbReference type="HAMAP" id="MF_00141">
    <property type="entry name" value="EF_P"/>
    <property type="match status" value="1"/>
</dbReference>
<dbReference type="InterPro" id="IPR015365">
    <property type="entry name" value="Elong-fact-P_C"/>
</dbReference>
<dbReference type="InterPro" id="IPR012340">
    <property type="entry name" value="NA-bd_OB-fold"/>
</dbReference>
<dbReference type="InterPro" id="IPR014722">
    <property type="entry name" value="Rib_uL2_dom2"/>
</dbReference>
<dbReference type="InterPro" id="IPR020599">
    <property type="entry name" value="Transl_elong_fac_P/YeiP"/>
</dbReference>
<dbReference type="InterPro" id="IPR013185">
    <property type="entry name" value="Transl_elong_KOW-like"/>
</dbReference>
<dbReference type="InterPro" id="IPR001059">
    <property type="entry name" value="Transl_elong_P/YeiP_cen"/>
</dbReference>
<dbReference type="InterPro" id="IPR013852">
    <property type="entry name" value="Transl_elong_P/YeiP_CS"/>
</dbReference>
<dbReference type="InterPro" id="IPR011768">
    <property type="entry name" value="Transl_elongation_fac_P"/>
</dbReference>
<dbReference type="InterPro" id="IPR008991">
    <property type="entry name" value="Translation_prot_SH3-like_sf"/>
</dbReference>
<dbReference type="NCBIfam" id="TIGR00038">
    <property type="entry name" value="efp"/>
    <property type="match status" value="1"/>
</dbReference>
<dbReference type="NCBIfam" id="NF001810">
    <property type="entry name" value="PRK00529.1"/>
    <property type="match status" value="1"/>
</dbReference>
<dbReference type="PANTHER" id="PTHR30053">
    <property type="entry name" value="ELONGATION FACTOR P"/>
    <property type="match status" value="1"/>
</dbReference>
<dbReference type="PANTHER" id="PTHR30053:SF12">
    <property type="entry name" value="ELONGATION FACTOR P (EF-P) FAMILY PROTEIN"/>
    <property type="match status" value="1"/>
</dbReference>
<dbReference type="Pfam" id="PF01132">
    <property type="entry name" value="EFP"/>
    <property type="match status" value="1"/>
</dbReference>
<dbReference type="Pfam" id="PF08207">
    <property type="entry name" value="EFP_N"/>
    <property type="match status" value="1"/>
</dbReference>
<dbReference type="Pfam" id="PF09285">
    <property type="entry name" value="Elong-fact-P_C"/>
    <property type="match status" value="1"/>
</dbReference>
<dbReference type="PIRSF" id="PIRSF005901">
    <property type="entry name" value="EF-P"/>
    <property type="match status" value="1"/>
</dbReference>
<dbReference type="SMART" id="SM01185">
    <property type="entry name" value="EFP"/>
    <property type="match status" value="1"/>
</dbReference>
<dbReference type="SMART" id="SM00841">
    <property type="entry name" value="Elong-fact-P_C"/>
    <property type="match status" value="1"/>
</dbReference>
<dbReference type="SUPFAM" id="SSF50249">
    <property type="entry name" value="Nucleic acid-binding proteins"/>
    <property type="match status" value="2"/>
</dbReference>
<dbReference type="SUPFAM" id="SSF50104">
    <property type="entry name" value="Translation proteins SH3-like domain"/>
    <property type="match status" value="1"/>
</dbReference>
<dbReference type="PROSITE" id="PS01275">
    <property type="entry name" value="EFP"/>
    <property type="match status" value="1"/>
</dbReference>
<feature type="chain" id="PRO_1000096144" description="Elongation factor P">
    <location>
        <begin position="1"/>
        <end position="186"/>
    </location>
</feature>
<reference key="1">
    <citation type="journal article" date="2008" name="Genome Res.">
        <title>Genome sequence of the beta-rhizobium Cupriavidus taiwanensis and comparative genomics of rhizobia.</title>
        <authorList>
            <person name="Amadou C."/>
            <person name="Pascal G."/>
            <person name="Mangenot S."/>
            <person name="Glew M."/>
            <person name="Bontemps C."/>
            <person name="Capela D."/>
            <person name="Carrere S."/>
            <person name="Cruveiller S."/>
            <person name="Dossat C."/>
            <person name="Lajus A."/>
            <person name="Marchetti M."/>
            <person name="Poinsot V."/>
            <person name="Rouy Z."/>
            <person name="Servin B."/>
            <person name="Saad M."/>
            <person name="Schenowitz C."/>
            <person name="Barbe V."/>
            <person name="Batut J."/>
            <person name="Medigue C."/>
            <person name="Masson-Boivin C."/>
        </authorList>
    </citation>
    <scope>NUCLEOTIDE SEQUENCE [LARGE SCALE GENOMIC DNA]</scope>
    <source>
        <strain>DSM 17343 / BCRC 17206 / CCUG 44338 / CIP 107171 / LMG 19424 / R1</strain>
    </source>
</reference>
<organism>
    <name type="scientific">Cupriavidus taiwanensis (strain DSM 17343 / BCRC 17206 / CCUG 44338 / CIP 107171 / LMG 19424 / R1)</name>
    <name type="common">Ralstonia taiwanensis (strain LMG 19424)</name>
    <dbReference type="NCBI Taxonomy" id="977880"/>
    <lineage>
        <taxon>Bacteria</taxon>
        <taxon>Pseudomonadati</taxon>
        <taxon>Pseudomonadota</taxon>
        <taxon>Betaproteobacteria</taxon>
        <taxon>Burkholderiales</taxon>
        <taxon>Burkholderiaceae</taxon>
        <taxon>Cupriavidus</taxon>
    </lineage>
</organism>